<name>NDHH_PROMT</name>
<gene>
    <name evidence="1" type="primary">ndhH</name>
    <name type="ordered locus">PMN2A_1540</name>
</gene>
<proteinExistence type="inferred from homology"/>
<sequence>MTQLETRTEPMVVNFGPHHPSMHGVLRLVVTLDGEDVVDCEPVIGYLHRGMEKIAENRTNVMFVPYVSRMDYAAGMFYEAIVVNAPERLANIKVPKRASYIRAIMLELNRIANHLLWLGPFLADVGAQTPFFYIFREREMIYDLWEAATGQRLINNNYFRIGGVACDLPWGWLEKCKDFCDWFGPKIDEYEKLITNNPIFRRRIEGLGVIGKEQAINWSLSGPMLRAAGVPWDLRKVDHYECYDDFEWDIAWEKEGDCYARYRVRIEEMRQSLKILRQACEMIPGGPTENLEAQRTVEGKKGDLSGFDYQYVAKKVAPTFKIPNGELYTRLESGKGEIGVFIQGNNDVTPWRFKIRAADSNNLQILPHILKGAKVADIMAILGSIDVIMGSVDR</sequence>
<feature type="chain" id="PRO_0000371915" description="NAD(P)H-quinone oxidoreductase subunit H">
    <location>
        <begin position="1"/>
        <end position="394"/>
    </location>
</feature>
<reference key="1">
    <citation type="journal article" date="2007" name="PLoS Genet.">
        <title>Patterns and implications of gene gain and loss in the evolution of Prochlorococcus.</title>
        <authorList>
            <person name="Kettler G.C."/>
            <person name="Martiny A.C."/>
            <person name="Huang K."/>
            <person name="Zucker J."/>
            <person name="Coleman M.L."/>
            <person name="Rodrigue S."/>
            <person name="Chen F."/>
            <person name="Lapidus A."/>
            <person name="Ferriera S."/>
            <person name="Johnson J."/>
            <person name="Steglich C."/>
            <person name="Church G.M."/>
            <person name="Richardson P."/>
            <person name="Chisholm S.W."/>
        </authorList>
    </citation>
    <scope>NUCLEOTIDE SEQUENCE [LARGE SCALE GENOMIC DNA]</scope>
    <source>
        <strain>NATL2A</strain>
    </source>
</reference>
<evidence type="ECO:0000255" key="1">
    <source>
        <dbReference type="HAMAP-Rule" id="MF_01358"/>
    </source>
</evidence>
<comment type="function">
    <text evidence="1">NDH-1 shuttles electrons from an unknown electron donor, via FMN and iron-sulfur (Fe-S) centers, to quinones in the respiratory and/or the photosynthetic chain. The immediate electron acceptor for the enzyme in this species is believed to be plastoquinone. Couples the redox reaction to proton translocation, and thus conserves the redox energy in a proton gradient. Cyanobacterial NDH-1 also plays a role in inorganic carbon-concentration.</text>
</comment>
<comment type="catalytic activity">
    <reaction evidence="1">
        <text>a plastoquinone + NADH + (n+1) H(+)(in) = a plastoquinol + NAD(+) + n H(+)(out)</text>
        <dbReference type="Rhea" id="RHEA:42608"/>
        <dbReference type="Rhea" id="RHEA-COMP:9561"/>
        <dbReference type="Rhea" id="RHEA-COMP:9562"/>
        <dbReference type="ChEBI" id="CHEBI:15378"/>
        <dbReference type="ChEBI" id="CHEBI:17757"/>
        <dbReference type="ChEBI" id="CHEBI:57540"/>
        <dbReference type="ChEBI" id="CHEBI:57945"/>
        <dbReference type="ChEBI" id="CHEBI:62192"/>
    </reaction>
</comment>
<comment type="catalytic activity">
    <reaction evidence="1">
        <text>a plastoquinone + NADPH + (n+1) H(+)(in) = a plastoquinol + NADP(+) + n H(+)(out)</text>
        <dbReference type="Rhea" id="RHEA:42612"/>
        <dbReference type="Rhea" id="RHEA-COMP:9561"/>
        <dbReference type="Rhea" id="RHEA-COMP:9562"/>
        <dbReference type="ChEBI" id="CHEBI:15378"/>
        <dbReference type="ChEBI" id="CHEBI:17757"/>
        <dbReference type="ChEBI" id="CHEBI:57783"/>
        <dbReference type="ChEBI" id="CHEBI:58349"/>
        <dbReference type="ChEBI" id="CHEBI:62192"/>
    </reaction>
</comment>
<comment type="subunit">
    <text evidence="1">NDH-1 can be composed of about 15 different subunits; different subcomplexes with different compositions have been identified which probably have different functions.</text>
</comment>
<comment type="subcellular location">
    <subcellularLocation>
        <location evidence="1">Cellular thylakoid membrane</location>
        <topology evidence="1">Peripheral membrane protein</topology>
        <orientation evidence="1">Cytoplasmic side</orientation>
    </subcellularLocation>
</comment>
<comment type="similarity">
    <text evidence="1">Belongs to the complex I 49 kDa subunit family.</text>
</comment>
<keyword id="KW-0472">Membrane</keyword>
<keyword id="KW-0520">NAD</keyword>
<keyword id="KW-0521">NADP</keyword>
<keyword id="KW-0618">Plastoquinone</keyword>
<keyword id="KW-0874">Quinone</keyword>
<keyword id="KW-1185">Reference proteome</keyword>
<keyword id="KW-0793">Thylakoid</keyword>
<keyword id="KW-1278">Translocase</keyword>
<keyword id="KW-0813">Transport</keyword>
<organism>
    <name type="scientific">Prochlorococcus marinus (strain NATL2A)</name>
    <dbReference type="NCBI Taxonomy" id="59920"/>
    <lineage>
        <taxon>Bacteria</taxon>
        <taxon>Bacillati</taxon>
        <taxon>Cyanobacteriota</taxon>
        <taxon>Cyanophyceae</taxon>
        <taxon>Synechococcales</taxon>
        <taxon>Prochlorococcaceae</taxon>
        <taxon>Prochlorococcus</taxon>
    </lineage>
</organism>
<accession>Q46HK0</accession>
<dbReference type="EC" id="7.1.1.-" evidence="1"/>
<dbReference type="EMBL" id="CP000095">
    <property type="protein sequence ID" value="AAZ59028.1"/>
    <property type="molecule type" value="Genomic_DNA"/>
</dbReference>
<dbReference type="RefSeq" id="WP_011294173.1">
    <property type="nucleotide sequence ID" value="NC_007335.2"/>
</dbReference>
<dbReference type="SMR" id="Q46HK0"/>
<dbReference type="STRING" id="59920.PMN2A_1540"/>
<dbReference type="KEGG" id="pmn:PMN2A_1540"/>
<dbReference type="HOGENOM" id="CLU_015134_1_2_3"/>
<dbReference type="OrthoDB" id="9801496at2"/>
<dbReference type="PhylomeDB" id="Q46HK0"/>
<dbReference type="Proteomes" id="UP000002535">
    <property type="component" value="Chromosome"/>
</dbReference>
<dbReference type="GO" id="GO:0031676">
    <property type="term" value="C:plasma membrane-derived thylakoid membrane"/>
    <property type="evidence" value="ECO:0007669"/>
    <property type="project" value="UniProtKB-SubCell"/>
</dbReference>
<dbReference type="GO" id="GO:0051287">
    <property type="term" value="F:NAD binding"/>
    <property type="evidence" value="ECO:0007669"/>
    <property type="project" value="InterPro"/>
</dbReference>
<dbReference type="GO" id="GO:0016655">
    <property type="term" value="F:oxidoreductase activity, acting on NAD(P)H, quinone or similar compound as acceptor"/>
    <property type="evidence" value="ECO:0007669"/>
    <property type="project" value="UniProtKB-UniRule"/>
</dbReference>
<dbReference type="GO" id="GO:0048038">
    <property type="term" value="F:quinone binding"/>
    <property type="evidence" value="ECO:0007669"/>
    <property type="project" value="UniProtKB-KW"/>
</dbReference>
<dbReference type="GO" id="GO:0019684">
    <property type="term" value="P:photosynthesis, light reaction"/>
    <property type="evidence" value="ECO:0007669"/>
    <property type="project" value="UniProtKB-UniRule"/>
</dbReference>
<dbReference type="Gene3D" id="1.10.645.10">
    <property type="entry name" value="Cytochrome-c3 Hydrogenase, chain B"/>
    <property type="match status" value="1"/>
</dbReference>
<dbReference type="HAMAP" id="MF_01358">
    <property type="entry name" value="NDH1_NuoD"/>
    <property type="match status" value="1"/>
</dbReference>
<dbReference type="InterPro" id="IPR001135">
    <property type="entry name" value="NADH_Q_OxRdtase_suD"/>
</dbReference>
<dbReference type="InterPro" id="IPR014029">
    <property type="entry name" value="NADH_UbQ_OxRdtase_49kDa_CS"/>
</dbReference>
<dbReference type="InterPro" id="IPR022885">
    <property type="entry name" value="NDH1_su_D/H"/>
</dbReference>
<dbReference type="InterPro" id="IPR029014">
    <property type="entry name" value="NiFe-Hase_large"/>
</dbReference>
<dbReference type="NCBIfam" id="NF004739">
    <property type="entry name" value="PRK06075.1"/>
    <property type="match status" value="1"/>
</dbReference>
<dbReference type="NCBIfam" id="NF005649">
    <property type="entry name" value="PRK07415.1"/>
    <property type="match status" value="1"/>
</dbReference>
<dbReference type="PANTHER" id="PTHR11993:SF10">
    <property type="entry name" value="NADH DEHYDROGENASE [UBIQUINONE] IRON-SULFUR PROTEIN 2, MITOCHONDRIAL"/>
    <property type="match status" value="1"/>
</dbReference>
<dbReference type="PANTHER" id="PTHR11993">
    <property type="entry name" value="NADH-UBIQUINONE OXIDOREDUCTASE 49 KDA SUBUNIT"/>
    <property type="match status" value="1"/>
</dbReference>
<dbReference type="Pfam" id="PF00346">
    <property type="entry name" value="Complex1_49kDa"/>
    <property type="match status" value="1"/>
</dbReference>
<dbReference type="SUPFAM" id="SSF56762">
    <property type="entry name" value="HydB/Nqo4-like"/>
    <property type="match status" value="1"/>
</dbReference>
<dbReference type="PROSITE" id="PS00535">
    <property type="entry name" value="COMPLEX1_49K"/>
    <property type="match status" value="1"/>
</dbReference>
<protein>
    <recommendedName>
        <fullName evidence="1">NAD(P)H-quinone oxidoreductase subunit H</fullName>
        <ecNumber evidence="1">7.1.1.-</ecNumber>
    </recommendedName>
    <alternativeName>
        <fullName>NAD(P)H dehydrogenase subunit H</fullName>
    </alternativeName>
    <alternativeName>
        <fullName evidence="1">NADH-plastoquinone oxidoreductase subunit H</fullName>
    </alternativeName>
    <alternativeName>
        <fullName evidence="1">NDH-1 subunit H</fullName>
        <shortName evidence="1">NDH-H</shortName>
    </alternativeName>
</protein>